<dbReference type="EC" id="2.5.1.75" evidence="1"/>
<dbReference type="EMBL" id="CP001025">
    <property type="protein sequence ID" value="ACB63180.1"/>
    <property type="molecule type" value="Genomic_DNA"/>
</dbReference>
<dbReference type="RefSeq" id="WP_012363164.1">
    <property type="nucleotide sequence ID" value="NC_010551.1"/>
</dbReference>
<dbReference type="SMR" id="B1YTV7"/>
<dbReference type="KEGG" id="bac:BamMC406_0684"/>
<dbReference type="HOGENOM" id="CLU_032616_0_0_4"/>
<dbReference type="OrthoDB" id="9776390at2"/>
<dbReference type="Proteomes" id="UP000001680">
    <property type="component" value="Chromosome 1"/>
</dbReference>
<dbReference type="GO" id="GO:0005524">
    <property type="term" value="F:ATP binding"/>
    <property type="evidence" value="ECO:0007669"/>
    <property type="project" value="UniProtKB-UniRule"/>
</dbReference>
<dbReference type="GO" id="GO:0052381">
    <property type="term" value="F:tRNA dimethylallyltransferase activity"/>
    <property type="evidence" value="ECO:0007669"/>
    <property type="project" value="UniProtKB-UniRule"/>
</dbReference>
<dbReference type="GO" id="GO:0006400">
    <property type="term" value="P:tRNA modification"/>
    <property type="evidence" value="ECO:0007669"/>
    <property type="project" value="TreeGrafter"/>
</dbReference>
<dbReference type="FunFam" id="1.10.20.140:FF:000001">
    <property type="entry name" value="tRNA dimethylallyltransferase"/>
    <property type="match status" value="1"/>
</dbReference>
<dbReference type="Gene3D" id="1.10.20.140">
    <property type="match status" value="1"/>
</dbReference>
<dbReference type="Gene3D" id="3.40.50.300">
    <property type="entry name" value="P-loop containing nucleotide triphosphate hydrolases"/>
    <property type="match status" value="1"/>
</dbReference>
<dbReference type="HAMAP" id="MF_00185">
    <property type="entry name" value="IPP_trans"/>
    <property type="match status" value="1"/>
</dbReference>
<dbReference type="InterPro" id="IPR039657">
    <property type="entry name" value="Dimethylallyltransferase"/>
</dbReference>
<dbReference type="InterPro" id="IPR018022">
    <property type="entry name" value="IPT"/>
</dbReference>
<dbReference type="InterPro" id="IPR027417">
    <property type="entry name" value="P-loop_NTPase"/>
</dbReference>
<dbReference type="NCBIfam" id="TIGR00174">
    <property type="entry name" value="miaA"/>
    <property type="match status" value="1"/>
</dbReference>
<dbReference type="PANTHER" id="PTHR11088">
    <property type="entry name" value="TRNA DIMETHYLALLYLTRANSFERASE"/>
    <property type="match status" value="1"/>
</dbReference>
<dbReference type="PANTHER" id="PTHR11088:SF60">
    <property type="entry name" value="TRNA DIMETHYLALLYLTRANSFERASE"/>
    <property type="match status" value="1"/>
</dbReference>
<dbReference type="Pfam" id="PF01715">
    <property type="entry name" value="IPPT"/>
    <property type="match status" value="1"/>
</dbReference>
<dbReference type="SUPFAM" id="SSF52540">
    <property type="entry name" value="P-loop containing nucleoside triphosphate hydrolases"/>
    <property type="match status" value="2"/>
</dbReference>
<keyword id="KW-0067">ATP-binding</keyword>
<keyword id="KW-0460">Magnesium</keyword>
<keyword id="KW-0547">Nucleotide-binding</keyword>
<keyword id="KW-0808">Transferase</keyword>
<keyword id="KW-0819">tRNA processing</keyword>
<comment type="function">
    <text evidence="1">Catalyzes the transfer of a dimethylallyl group onto the adenine at position 37 in tRNAs that read codons beginning with uridine, leading to the formation of N6-(dimethylallyl)adenosine (i(6)A).</text>
</comment>
<comment type="catalytic activity">
    <reaction evidence="1">
        <text>adenosine(37) in tRNA + dimethylallyl diphosphate = N(6)-dimethylallyladenosine(37) in tRNA + diphosphate</text>
        <dbReference type="Rhea" id="RHEA:26482"/>
        <dbReference type="Rhea" id="RHEA-COMP:10162"/>
        <dbReference type="Rhea" id="RHEA-COMP:10375"/>
        <dbReference type="ChEBI" id="CHEBI:33019"/>
        <dbReference type="ChEBI" id="CHEBI:57623"/>
        <dbReference type="ChEBI" id="CHEBI:74411"/>
        <dbReference type="ChEBI" id="CHEBI:74415"/>
        <dbReference type="EC" id="2.5.1.75"/>
    </reaction>
</comment>
<comment type="cofactor">
    <cofactor evidence="1">
        <name>Mg(2+)</name>
        <dbReference type="ChEBI" id="CHEBI:18420"/>
    </cofactor>
</comment>
<comment type="subunit">
    <text evidence="1">Monomer.</text>
</comment>
<comment type="similarity">
    <text evidence="1">Belongs to the IPP transferase family.</text>
</comment>
<evidence type="ECO:0000255" key="1">
    <source>
        <dbReference type="HAMAP-Rule" id="MF_00185"/>
    </source>
</evidence>
<feature type="chain" id="PRO_1000098647" description="tRNA dimethylallyltransferase">
    <location>
        <begin position="1"/>
        <end position="324"/>
    </location>
</feature>
<feature type="region of interest" description="Interaction with substrate tRNA" evidence="1">
    <location>
        <begin position="42"/>
        <end position="45"/>
    </location>
</feature>
<feature type="region of interest" description="Interaction with substrate tRNA" evidence="1">
    <location>
        <begin position="166"/>
        <end position="170"/>
    </location>
</feature>
<feature type="region of interest" description="Interaction with substrate tRNA" evidence="1">
    <location>
        <begin position="251"/>
        <end position="256"/>
    </location>
</feature>
<feature type="region of interest" description="Interaction with substrate tRNA" evidence="1">
    <location>
        <begin position="284"/>
        <end position="291"/>
    </location>
</feature>
<feature type="binding site" evidence="1">
    <location>
        <begin position="17"/>
        <end position="24"/>
    </location>
    <ligand>
        <name>ATP</name>
        <dbReference type="ChEBI" id="CHEBI:30616"/>
    </ligand>
</feature>
<feature type="binding site" evidence="1">
    <location>
        <begin position="19"/>
        <end position="24"/>
    </location>
    <ligand>
        <name>substrate</name>
    </ligand>
</feature>
<feature type="site" description="Interaction with substrate tRNA" evidence="1">
    <location>
        <position position="108"/>
    </location>
</feature>
<feature type="site" description="Interaction with substrate tRNA" evidence="1">
    <location>
        <position position="130"/>
    </location>
</feature>
<protein>
    <recommendedName>
        <fullName evidence="1">tRNA dimethylallyltransferase</fullName>
        <ecNumber evidence="1">2.5.1.75</ecNumber>
    </recommendedName>
    <alternativeName>
        <fullName evidence="1">Dimethylallyl diphosphate:tRNA dimethylallyltransferase</fullName>
        <shortName evidence="1">DMAPP:tRNA dimethylallyltransferase</shortName>
        <shortName evidence="1">DMATase</shortName>
    </alternativeName>
    <alternativeName>
        <fullName evidence="1">Isopentenyl-diphosphate:tRNA isopentenyltransferase</fullName>
        <shortName evidence="1">IPP transferase</shortName>
        <shortName evidence="1">IPPT</shortName>
        <shortName evidence="1">IPTase</shortName>
    </alternativeName>
</protein>
<gene>
    <name evidence="1" type="primary">miaA</name>
    <name type="ordered locus">BamMC406_0684</name>
</gene>
<name>MIAA_BURA4</name>
<proteinExistence type="inferred from homology"/>
<reference key="1">
    <citation type="submission" date="2008-04" db="EMBL/GenBank/DDBJ databases">
        <title>Complete sequence of chromosome 1 of Burkholderia ambifaria MC40-6.</title>
        <authorList>
            <person name="Copeland A."/>
            <person name="Lucas S."/>
            <person name="Lapidus A."/>
            <person name="Glavina del Rio T."/>
            <person name="Dalin E."/>
            <person name="Tice H."/>
            <person name="Pitluck S."/>
            <person name="Chain P."/>
            <person name="Malfatti S."/>
            <person name="Shin M."/>
            <person name="Vergez L."/>
            <person name="Lang D."/>
            <person name="Schmutz J."/>
            <person name="Larimer F."/>
            <person name="Land M."/>
            <person name="Hauser L."/>
            <person name="Kyrpides N."/>
            <person name="Lykidis A."/>
            <person name="Ramette A."/>
            <person name="Konstantinidis K."/>
            <person name="Tiedje J."/>
            <person name="Richardson P."/>
        </authorList>
    </citation>
    <scope>NUCLEOTIDE SEQUENCE [LARGE SCALE GENOMIC DNA]</scope>
    <source>
        <strain>MC40-6</strain>
    </source>
</reference>
<accession>B1YTV7</accession>
<sequence>MSASPQSRPTTIACLLGPTASGKTAAALALAARRPIEIVSIDSALVYRDMDIGTAKPTRDERARVPHHLIDIIDPADAYSAAEFRADALRLIGEIAARGRTPLLAGGTMLYYKALTQGLNDLPTADPAVRAELDADAARDGWPALHARLAQVDPATAARLAPNDSQRIQRALEVFLLSGQPMSVLLAAPRRADDEAAAYRFVPVALEPSDRAVLHARIAQRFDAMLDAGFIDEVERLRRREDLHPDLPSMRCVGYRQAWEFLDGDTDYRTMRDKGIFATRQLCKRQITWLRALPERIVVDCVAPDATARALDTLERVLDDHLPA</sequence>
<organism>
    <name type="scientific">Burkholderia ambifaria (strain MC40-6)</name>
    <dbReference type="NCBI Taxonomy" id="398577"/>
    <lineage>
        <taxon>Bacteria</taxon>
        <taxon>Pseudomonadati</taxon>
        <taxon>Pseudomonadota</taxon>
        <taxon>Betaproteobacteria</taxon>
        <taxon>Burkholderiales</taxon>
        <taxon>Burkholderiaceae</taxon>
        <taxon>Burkholderia</taxon>
        <taxon>Burkholderia cepacia complex</taxon>
    </lineage>
</organism>